<proteinExistence type="inferred from homology"/>
<name>PAGP_LARHH</name>
<protein>
    <recommendedName>
        <fullName evidence="1">Lipid A acyltransferase PagP</fullName>
        <ecNumber evidence="1">2.3.1.251</ecNumber>
    </recommendedName>
    <alternativeName>
        <fullName evidence="1">Lipid A acylation protein</fullName>
    </alternativeName>
</protein>
<reference key="1">
    <citation type="journal article" date="2009" name="PLoS Genet.">
        <title>The complete genome and proteome of Laribacter hongkongensis reveal potential mechanisms for adaptations to different temperatures and habitats.</title>
        <authorList>
            <person name="Woo P.C.Y."/>
            <person name="Lau S.K.P."/>
            <person name="Tse H."/>
            <person name="Teng J.L.L."/>
            <person name="Curreem S.O."/>
            <person name="Tsang A.K.L."/>
            <person name="Fan R.Y.Y."/>
            <person name="Wong G.K.M."/>
            <person name="Huang Y."/>
            <person name="Loman N.J."/>
            <person name="Snyder L.A.S."/>
            <person name="Cai J.J."/>
            <person name="Huang J.-D."/>
            <person name="Mak W."/>
            <person name="Pallen M.J."/>
            <person name="Lok S."/>
            <person name="Yuen K.-Y."/>
        </authorList>
    </citation>
    <scope>NUCLEOTIDE SEQUENCE [LARGE SCALE GENOMIC DNA]</scope>
    <source>
        <strain>HLHK9</strain>
    </source>
</reference>
<feature type="signal peptide" evidence="1">
    <location>
        <begin position="1"/>
        <end position="22"/>
    </location>
</feature>
<feature type="chain" id="PRO_0000414456" description="Lipid A acyltransferase PagP">
    <location>
        <begin position="23"/>
        <end position="206"/>
    </location>
</feature>
<feature type="region of interest" description="Disordered" evidence="2">
    <location>
        <begin position="26"/>
        <end position="50"/>
    </location>
</feature>
<feature type="compositionally biased region" description="Low complexity" evidence="2">
    <location>
        <begin position="26"/>
        <end position="46"/>
    </location>
</feature>
<feature type="active site" evidence="1">
    <location>
        <position position="80"/>
    </location>
</feature>
<feature type="active site" evidence="1">
    <location>
        <position position="123"/>
    </location>
</feature>
<feature type="active site" evidence="1">
    <location>
        <position position="124"/>
    </location>
</feature>
<feature type="site" description="Role in lipopolysaccharide recognition" evidence="1">
    <location>
        <position position="89"/>
    </location>
</feature>
<evidence type="ECO:0000255" key="1">
    <source>
        <dbReference type="HAMAP-Rule" id="MF_00837"/>
    </source>
</evidence>
<evidence type="ECO:0000256" key="2">
    <source>
        <dbReference type="SAM" id="MobiDB-lite"/>
    </source>
</evidence>
<sequence length="206" mass="23324">MKQMVCWLTAGLLTLGGLPARAGDTVPAVPETPAAPAAPAVQETPASSAAPGFWQRSWDNVETTWRSDRYELYLPAITWHNRAFYDRDKIDEYNEHPWGLGLGRYRYDSDGNWHALYAMFFLDSHDKVEPFAGYAWQKIWRPADDVRLGAGFTVGVTARSDYSYIPFPAILPLVSVEYRRLALQATYIPGGHNNGNVLFGWLRWQL</sequence>
<comment type="function">
    <text evidence="1">Transfers a fatty acid residue from the sn-1 position of a phospholipid to the N-linked hydroxyfatty acid chain on the proximal unit of lipid A or its precursors.</text>
</comment>
<comment type="catalytic activity">
    <reaction evidence="1">
        <text>a lipid A + a 1,2-diacyl-sn-glycero-3-phosphocholine = a hepta-acyl lipid A + a 2-acyl-sn-glycero-3-phosphocholine</text>
        <dbReference type="Rhea" id="RHEA:74275"/>
        <dbReference type="ChEBI" id="CHEBI:57643"/>
        <dbReference type="ChEBI" id="CHEBI:57875"/>
        <dbReference type="ChEBI" id="CHEBI:193141"/>
        <dbReference type="ChEBI" id="CHEBI:193142"/>
        <dbReference type="EC" id="2.3.1.251"/>
    </reaction>
</comment>
<comment type="catalytic activity">
    <reaction evidence="1">
        <text>a lipid IVA + a 1,2-diacyl-sn-glycero-3-phosphocholine = a lipid IVB + a 2-acyl-sn-glycero-3-phosphocholine</text>
        <dbReference type="Rhea" id="RHEA:74279"/>
        <dbReference type="ChEBI" id="CHEBI:57643"/>
        <dbReference type="ChEBI" id="CHEBI:57875"/>
        <dbReference type="ChEBI" id="CHEBI:176425"/>
        <dbReference type="ChEBI" id="CHEBI:193143"/>
        <dbReference type="EC" id="2.3.1.251"/>
    </reaction>
</comment>
<comment type="catalytic activity">
    <reaction evidence="1">
        <text>a lipid IIA + a 1,2-diacyl-sn-glycero-3-phosphocholine = a lipid IIB + a 2-acyl-sn-glycero-3-phosphocholine</text>
        <dbReference type="Rhea" id="RHEA:74283"/>
        <dbReference type="ChEBI" id="CHEBI:57643"/>
        <dbReference type="ChEBI" id="CHEBI:57875"/>
        <dbReference type="ChEBI" id="CHEBI:193144"/>
        <dbReference type="ChEBI" id="CHEBI:193145"/>
        <dbReference type="EC" id="2.3.1.251"/>
    </reaction>
</comment>
<comment type="subunit">
    <text evidence="1">Homodimer.</text>
</comment>
<comment type="subcellular location">
    <subcellularLocation>
        <location evidence="1">Cell outer membrane</location>
    </subcellularLocation>
</comment>
<comment type="similarity">
    <text evidence="1">Belongs to the lipid A palmitoyltransferase family.</text>
</comment>
<keyword id="KW-0012">Acyltransferase</keyword>
<keyword id="KW-0998">Cell outer membrane</keyword>
<keyword id="KW-0472">Membrane</keyword>
<keyword id="KW-1185">Reference proteome</keyword>
<keyword id="KW-0732">Signal</keyword>
<keyword id="KW-0808">Transferase</keyword>
<accession>C1D6F2</accession>
<organism>
    <name type="scientific">Laribacter hongkongensis (strain HLHK9)</name>
    <dbReference type="NCBI Taxonomy" id="557598"/>
    <lineage>
        <taxon>Bacteria</taxon>
        <taxon>Pseudomonadati</taxon>
        <taxon>Pseudomonadota</taxon>
        <taxon>Betaproteobacteria</taxon>
        <taxon>Neisseriales</taxon>
        <taxon>Aquaspirillaceae</taxon>
        <taxon>Laribacter</taxon>
    </lineage>
</organism>
<dbReference type="EC" id="2.3.1.251" evidence="1"/>
<dbReference type="EMBL" id="CP001154">
    <property type="protein sequence ID" value="ACO76187.1"/>
    <property type="molecule type" value="Genomic_DNA"/>
</dbReference>
<dbReference type="RefSeq" id="WP_012698650.1">
    <property type="nucleotide sequence ID" value="NC_012559.1"/>
</dbReference>
<dbReference type="SMR" id="C1D6F2"/>
<dbReference type="STRING" id="557598.LHK_03209"/>
<dbReference type="GeneID" id="75108388"/>
<dbReference type="KEGG" id="lhk:LHK_03209"/>
<dbReference type="eggNOG" id="ENOG502Z7SY">
    <property type="taxonomic scope" value="Bacteria"/>
</dbReference>
<dbReference type="HOGENOM" id="CLU_104099_0_0_4"/>
<dbReference type="Proteomes" id="UP000002010">
    <property type="component" value="Chromosome"/>
</dbReference>
<dbReference type="GO" id="GO:0009279">
    <property type="term" value="C:cell outer membrane"/>
    <property type="evidence" value="ECO:0007669"/>
    <property type="project" value="UniProtKB-SubCell"/>
</dbReference>
<dbReference type="GO" id="GO:0016746">
    <property type="term" value="F:acyltransferase activity"/>
    <property type="evidence" value="ECO:0007669"/>
    <property type="project" value="UniProtKB-UniRule"/>
</dbReference>
<dbReference type="GO" id="GO:0009245">
    <property type="term" value="P:lipid A biosynthetic process"/>
    <property type="evidence" value="ECO:0007669"/>
    <property type="project" value="UniProtKB-UniRule"/>
</dbReference>
<dbReference type="FunFam" id="2.40.160.20:FF:000002">
    <property type="entry name" value="Lipid A palmitoyltransferase PagP"/>
    <property type="match status" value="1"/>
</dbReference>
<dbReference type="Gene3D" id="2.40.160.20">
    <property type="match status" value="1"/>
</dbReference>
<dbReference type="HAMAP" id="MF_00837">
    <property type="entry name" value="PagP_transferase"/>
    <property type="match status" value="1"/>
</dbReference>
<dbReference type="InterPro" id="IPR009746">
    <property type="entry name" value="LipidA_acyl_PagP"/>
</dbReference>
<dbReference type="InterPro" id="IPR011250">
    <property type="entry name" value="OMP/PagP_b-brl"/>
</dbReference>
<dbReference type="NCBIfam" id="NF008271">
    <property type="entry name" value="PRK11045.1"/>
    <property type="match status" value="1"/>
</dbReference>
<dbReference type="Pfam" id="PF07017">
    <property type="entry name" value="PagP"/>
    <property type="match status" value="1"/>
</dbReference>
<dbReference type="SUPFAM" id="SSF56925">
    <property type="entry name" value="OMPA-like"/>
    <property type="match status" value="1"/>
</dbReference>
<gene>
    <name evidence="1" type="primary">pagP</name>
    <name type="ordered locus">LHK_03209</name>
</gene>